<organism>
    <name type="scientific">Homo sapiens</name>
    <name type="common">Human</name>
    <dbReference type="NCBI Taxonomy" id="9606"/>
    <lineage>
        <taxon>Eukaryota</taxon>
        <taxon>Metazoa</taxon>
        <taxon>Chordata</taxon>
        <taxon>Craniata</taxon>
        <taxon>Vertebrata</taxon>
        <taxon>Euteleostomi</taxon>
        <taxon>Mammalia</taxon>
        <taxon>Eutheria</taxon>
        <taxon>Euarchontoglires</taxon>
        <taxon>Primates</taxon>
        <taxon>Haplorrhini</taxon>
        <taxon>Catarrhini</taxon>
        <taxon>Hominidae</taxon>
        <taxon>Homo</taxon>
    </lineage>
</organism>
<dbReference type="EC" id="3.6.5.2" evidence="16 21"/>
<dbReference type="EMBL" id="AF092437">
    <property type="protein sequence ID" value="AAP97212.1"/>
    <property type="molecule type" value="mRNA"/>
</dbReference>
<dbReference type="EMBL" id="AL136635">
    <property type="protein sequence ID" value="CAB66570.1"/>
    <property type="molecule type" value="mRNA"/>
</dbReference>
<dbReference type="EMBL" id="AK292086">
    <property type="protein sequence ID" value="BAF84775.1"/>
    <property type="molecule type" value="mRNA"/>
</dbReference>
<dbReference type="EMBL" id="AK315333">
    <property type="protein sequence ID" value="BAG37733.1"/>
    <property type="molecule type" value="mRNA"/>
</dbReference>
<dbReference type="EMBL" id="BC071169">
    <property type="protein sequence ID" value="AAH71169.1"/>
    <property type="molecule type" value="mRNA"/>
</dbReference>
<dbReference type="CCDS" id="CCDS31613.1"/>
<dbReference type="RefSeq" id="NP_112243.1">
    <property type="nucleotide sequence ID" value="NM_030981.3"/>
</dbReference>
<dbReference type="PDB" id="3JZA">
    <property type="method" value="X-ray"/>
    <property type="resolution" value="1.80 A"/>
    <property type="chains" value="A=3-174"/>
</dbReference>
<dbReference type="PDB" id="3NKV">
    <property type="method" value="X-ray"/>
    <property type="resolution" value="1.70 A"/>
    <property type="chains" value="A/B=3-174"/>
</dbReference>
<dbReference type="PDB" id="4HLQ">
    <property type="method" value="X-ray"/>
    <property type="resolution" value="3.30 A"/>
    <property type="chains" value="B/D/F/H/J=3-174"/>
</dbReference>
<dbReference type="PDB" id="4I1O">
    <property type="method" value="X-ray"/>
    <property type="resolution" value="2.70 A"/>
    <property type="chains" value="A/C/E/G=3-174"/>
</dbReference>
<dbReference type="PDB" id="5O74">
    <property type="method" value="X-ray"/>
    <property type="resolution" value="2.50 A"/>
    <property type="chains" value="B/D/F/H/J/L=3-174"/>
</dbReference>
<dbReference type="PDB" id="5SZH">
    <property type="method" value="X-ray"/>
    <property type="resolution" value="2.30 A"/>
    <property type="chains" value="B=1-201"/>
</dbReference>
<dbReference type="PDB" id="5SZK">
    <property type="method" value="X-ray"/>
    <property type="resolution" value="2.80 A"/>
    <property type="chains" value="B=2-201"/>
</dbReference>
<dbReference type="PDB" id="6SKU">
    <property type="method" value="X-ray"/>
    <property type="resolution" value="3.20 A"/>
    <property type="chains" value="B=3-174"/>
</dbReference>
<dbReference type="PDB" id="8ALK">
    <property type="method" value="X-ray"/>
    <property type="resolution" value="2.15 A"/>
    <property type="chains" value="B=3-174"/>
</dbReference>
<dbReference type="PDBsum" id="3JZA"/>
<dbReference type="PDBsum" id="3NKV"/>
<dbReference type="PDBsum" id="4HLQ"/>
<dbReference type="PDBsum" id="4I1O"/>
<dbReference type="PDBsum" id="5O74"/>
<dbReference type="PDBsum" id="5SZH"/>
<dbReference type="PDBsum" id="5SZK"/>
<dbReference type="PDBsum" id="6SKU"/>
<dbReference type="PDBsum" id="8ALK"/>
<dbReference type="SMR" id="Q9H0U4"/>
<dbReference type="BioGRID" id="123619">
    <property type="interactions" value="269"/>
</dbReference>
<dbReference type="DIP" id="DIP-42462N"/>
<dbReference type="FunCoup" id="Q9H0U4">
    <property type="interactions" value="2298"/>
</dbReference>
<dbReference type="IntAct" id="Q9H0U4">
    <property type="interactions" value="85"/>
</dbReference>
<dbReference type="MINT" id="Q9H0U4"/>
<dbReference type="STRING" id="9606.ENSP00000310226"/>
<dbReference type="GlyGen" id="Q9H0U4">
    <property type="glycosylation" value="1 site, 1 O-linked glycan (1 site)"/>
</dbReference>
<dbReference type="iPTMnet" id="Q9H0U4"/>
<dbReference type="MetOSite" id="Q9H0U4"/>
<dbReference type="PhosphoSitePlus" id="Q9H0U4"/>
<dbReference type="SwissPalm" id="Q9H0U4"/>
<dbReference type="BioMuta" id="RAB1B"/>
<dbReference type="DMDM" id="23396834"/>
<dbReference type="jPOST" id="Q9H0U4"/>
<dbReference type="MassIVE" id="Q9H0U4"/>
<dbReference type="PaxDb" id="9606-ENSP00000310226"/>
<dbReference type="PeptideAtlas" id="Q9H0U4"/>
<dbReference type="PRIDE" id="Q9H0U4"/>
<dbReference type="ProteomicsDB" id="80325"/>
<dbReference type="Pumba" id="Q9H0U4"/>
<dbReference type="TopDownProteomics" id="Q9H0U4"/>
<dbReference type="Antibodypedia" id="4132">
    <property type="antibodies" value="296 antibodies from 32 providers"/>
</dbReference>
<dbReference type="DNASU" id="81876"/>
<dbReference type="YCharOS" id="Q9H0U4">
    <property type="antibodies" value="Tested 5 antibodies from 3 manufacturers"/>
</dbReference>
<dbReference type="Ensembl" id="ENST00000311481.11">
    <property type="protein sequence ID" value="ENSP00000310226.6"/>
    <property type="gene ID" value="ENSG00000174903.16"/>
</dbReference>
<dbReference type="GeneID" id="81876"/>
<dbReference type="KEGG" id="hsa:81876"/>
<dbReference type="MANE-Select" id="ENST00000311481.11">
    <property type="protein sequence ID" value="ENSP00000310226.6"/>
    <property type="RefSeq nucleotide sequence ID" value="NM_030981.3"/>
    <property type="RefSeq protein sequence ID" value="NP_112243.1"/>
</dbReference>
<dbReference type="UCSC" id="uc001ohf.4">
    <property type="organism name" value="human"/>
</dbReference>
<dbReference type="AGR" id="HGNC:18370"/>
<dbReference type="CTD" id="81876"/>
<dbReference type="DisGeNET" id="81876"/>
<dbReference type="GeneCards" id="RAB1B"/>
<dbReference type="HGNC" id="HGNC:18370">
    <property type="gene designation" value="RAB1B"/>
</dbReference>
<dbReference type="HPA" id="ENSG00000174903">
    <property type="expression patterns" value="Low tissue specificity"/>
</dbReference>
<dbReference type="MIM" id="612565">
    <property type="type" value="gene"/>
</dbReference>
<dbReference type="neXtProt" id="NX_Q9H0U4"/>
<dbReference type="OpenTargets" id="ENSG00000174903"/>
<dbReference type="PharmGKB" id="PA34108"/>
<dbReference type="VEuPathDB" id="HostDB:ENSG00000174903"/>
<dbReference type="eggNOG" id="KOG0084">
    <property type="taxonomic scope" value="Eukaryota"/>
</dbReference>
<dbReference type="GeneTree" id="ENSGT00940000155078"/>
<dbReference type="HOGENOM" id="CLU_041217_23_1_1"/>
<dbReference type="InParanoid" id="Q9H0U4"/>
<dbReference type="OMA" id="PDYHYLF"/>
<dbReference type="OrthoDB" id="9989112at2759"/>
<dbReference type="PAN-GO" id="Q9H0U4">
    <property type="GO annotations" value="4 GO annotations based on evolutionary models"/>
</dbReference>
<dbReference type="PhylomeDB" id="Q9H0U4"/>
<dbReference type="TreeFam" id="TF300097"/>
<dbReference type="BRENDA" id="3.6.5.2">
    <property type="organism ID" value="2681"/>
</dbReference>
<dbReference type="PathwayCommons" id="Q9H0U4"/>
<dbReference type="Reactome" id="R-HSA-162658">
    <property type="pathway name" value="Golgi Cisternae Pericentriolar Stack Reorganization"/>
</dbReference>
<dbReference type="Reactome" id="R-HSA-204005">
    <property type="pathway name" value="COPII-mediated vesicle transport"/>
</dbReference>
<dbReference type="Reactome" id="R-HSA-6807878">
    <property type="pathway name" value="COPI-mediated anterograde transport"/>
</dbReference>
<dbReference type="Reactome" id="R-HSA-6811434">
    <property type="pathway name" value="COPI-dependent Golgi-to-ER retrograde traffic"/>
</dbReference>
<dbReference type="Reactome" id="R-HSA-8873719">
    <property type="pathway name" value="RAB geranylgeranylation"/>
</dbReference>
<dbReference type="Reactome" id="R-HSA-8876198">
    <property type="pathway name" value="RAB GEFs exchange GTP for GDP on RABs"/>
</dbReference>
<dbReference type="SABIO-RK" id="Q9H0U4"/>
<dbReference type="SignaLink" id="Q9H0U4"/>
<dbReference type="BioGRID-ORCS" id="81876">
    <property type="hits" value="166 hits in 1158 CRISPR screens"/>
</dbReference>
<dbReference type="CD-CODE" id="91857CE7">
    <property type="entry name" value="Nucleolus"/>
</dbReference>
<dbReference type="CD-CODE" id="FB4E32DD">
    <property type="entry name" value="Presynaptic clusters and postsynaptic densities"/>
</dbReference>
<dbReference type="ChiTaRS" id="RAB1B">
    <property type="organism name" value="human"/>
</dbReference>
<dbReference type="EvolutionaryTrace" id="Q9H0U4"/>
<dbReference type="GeneWiki" id="RAB1B"/>
<dbReference type="GenomeRNAi" id="81876"/>
<dbReference type="Pharos" id="Q9H0U4">
    <property type="development level" value="Tbio"/>
</dbReference>
<dbReference type="PRO" id="PR:Q9H0U4"/>
<dbReference type="Proteomes" id="UP000005640">
    <property type="component" value="Chromosome 11"/>
</dbReference>
<dbReference type="RNAct" id="Q9H0U4">
    <property type="molecule type" value="protein"/>
</dbReference>
<dbReference type="Bgee" id="ENSG00000174903">
    <property type="expression patterns" value="Expressed in mucosa of transverse colon and 201 other cell types or tissues"/>
</dbReference>
<dbReference type="ExpressionAtlas" id="Q9H0U4">
    <property type="expression patterns" value="baseline and differential"/>
</dbReference>
<dbReference type="GO" id="GO:0005829">
    <property type="term" value="C:cytosol"/>
    <property type="evidence" value="ECO:0000304"/>
    <property type="project" value="Reactome"/>
</dbReference>
<dbReference type="GO" id="GO:0012505">
    <property type="term" value="C:endomembrane system"/>
    <property type="evidence" value="ECO:0000318"/>
    <property type="project" value="GO_Central"/>
</dbReference>
<dbReference type="GO" id="GO:0005789">
    <property type="term" value="C:endoplasmic reticulum membrane"/>
    <property type="evidence" value="ECO:0000304"/>
    <property type="project" value="Reactome"/>
</dbReference>
<dbReference type="GO" id="GO:0033116">
    <property type="term" value="C:endoplasmic reticulum-Golgi intermediate compartment membrane"/>
    <property type="evidence" value="ECO:0000304"/>
    <property type="project" value="Reactome"/>
</dbReference>
<dbReference type="GO" id="GO:0070062">
    <property type="term" value="C:extracellular exosome"/>
    <property type="evidence" value="ECO:0007005"/>
    <property type="project" value="UniProtKB"/>
</dbReference>
<dbReference type="GO" id="GO:0005794">
    <property type="term" value="C:Golgi apparatus"/>
    <property type="evidence" value="ECO:0000314"/>
    <property type="project" value="LIFEdb"/>
</dbReference>
<dbReference type="GO" id="GO:0000139">
    <property type="term" value="C:Golgi membrane"/>
    <property type="evidence" value="ECO:0000304"/>
    <property type="project" value="Reactome"/>
</dbReference>
<dbReference type="GO" id="GO:0048471">
    <property type="term" value="C:perinuclear region of cytoplasm"/>
    <property type="evidence" value="ECO:0007669"/>
    <property type="project" value="UniProtKB-SubCell"/>
</dbReference>
<dbReference type="GO" id="GO:0034045">
    <property type="term" value="C:phagophore assembly site membrane"/>
    <property type="evidence" value="ECO:0000314"/>
    <property type="project" value="UniProtKB"/>
</dbReference>
<dbReference type="GO" id="GO:0030133">
    <property type="term" value="C:transport vesicle"/>
    <property type="evidence" value="ECO:0000304"/>
    <property type="project" value="Reactome"/>
</dbReference>
<dbReference type="GO" id="GO:0003925">
    <property type="term" value="F:G protein activity"/>
    <property type="evidence" value="ECO:0007669"/>
    <property type="project" value="UniProtKB-EC"/>
</dbReference>
<dbReference type="GO" id="GO:0005525">
    <property type="term" value="F:GTP binding"/>
    <property type="evidence" value="ECO:0000314"/>
    <property type="project" value="UniProtKB"/>
</dbReference>
<dbReference type="GO" id="GO:0003924">
    <property type="term" value="F:GTPase activity"/>
    <property type="evidence" value="ECO:0000318"/>
    <property type="project" value="GO_Central"/>
</dbReference>
<dbReference type="GO" id="GO:0000045">
    <property type="term" value="P:autophagosome assembly"/>
    <property type="evidence" value="ECO:0000318"/>
    <property type="project" value="GO_Central"/>
</dbReference>
<dbReference type="GO" id="GO:0006888">
    <property type="term" value="P:endoplasmic reticulum to Golgi vesicle-mediated transport"/>
    <property type="evidence" value="ECO:0000316"/>
    <property type="project" value="UniProtKB"/>
</dbReference>
<dbReference type="GO" id="GO:0007030">
    <property type="term" value="P:Golgi organization"/>
    <property type="evidence" value="ECO:0000315"/>
    <property type="project" value="UniProtKB"/>
</dbReference>
<dbReference type="GO" id="GO:0006886">
    <property type="term" value="P:intracellular protein transport"/>
    <property type="evidence" value="ECO:0000318"/>
    <property type="project" value="GO_Central"/>
</dbReference>
<dbReference type="GO" id="GO:1903020">
    <property type="term" value="P:positive regulation of glycoprotein metabolic process"/>
    <property type="evidence" value="ECO:0000316"/>
    <property type="project" value="UniProtKB"/>
</dbReference>
<dbReference type="GO" id="GO:2000785">
    <property type="term" value="P:regulation of autophagosome assembly"/>
    <property type="evidence" value="ECO:0000315"/>
    <property type="project" value="UniProtKB"/>
</dbReference>
<dbReference type="GO" id="GO:0019068">
    <property type="term" value="P:virion assembly"/>
    <property type="evidence" value="ECO:0000316"/>
    <property type="project" value="UniProtKB"/>
</dbReference>
<dbReference type="CDD" id="cd01869">
    <property type="entry name" value="Rab1_Ypt1"/>
    <property type="match status" value="1"/>
</dbReference>
<dbReference type="FunFam" id="3.40.50.300:FF:000069">
    <property type="entry name" value="Ras GTP-binding protein YPT1"/>
    <property type="match status" value="1"/>
</dbReference>
<dbReference type="Gene3D" id="3.40.50.300">
    <property type="entry name" value="P-loop containing nucleotide triphosphate hydrolases"/>
    <property type="match status" value="1"/>
</dbReference>
<dbReference type="InterPro" id="IPR027417">
    <property type="entry name" value="P-loop_NTPase"/>
</dbReference>
<dbReference type="InterPro" id="IPR050227">
    <property type="entry name" value="Rab"/>
</dbReference>
<dbReference type="InterPro" id="IPR005225">
    <property type="entry name" value="Small_GTP-bd"/>
</dbReference>
<dbReference type="InterPro" id="IPR001806">
    <property type="entry name" value="Small_GTPase"/>
</dbReference>
<dbReference type="NCBIfam" id="TIGR00231">
    <property type="entry name" value="small_GTP"/>
    <property type="match status" value="1"/>
</dbReference>
<dbReference type="PANTHER" id="PTHR47977">
    <property type="entry name" value="RAS-RELATED PROTEIN RAB"/>
    <property type="match status" value="1"/>
</dbReference>
<dbReference type="Pfam" id="PF00071">
    <property type="entry name" value="Ras"/>
    <property type="match status" value="1"/>
</dbReference>
<dbReference type="PRINTS" id="PR00449">
    <property type="entry name" value="RASTRNSFRMNG"/>
</dbReference>
<dbReference type="SMART" id="SM00177">
    <property type="entry name" value="ARF"/>
    <property type="match status" value="1"/>
</dbReference>
<dbReference type="SMART" id="SM00175">
    <property type="entry name" value="RAB"/>
    <property type="match status" value="1"/>
</dbReference>
<dbReference type="SMART" id="SM00176">
    <property type="entry name" value="RAN"/>
    <property type="match status" value="1"/>
</dbReference>
<dbReference type="SMART" id="SM00173">
    <property type="entry name" value="RAS"/>
    <property type="match status" value="1"/>
</dbReference>
<dbReference type="SMART" id="SM00174">
    <property type="entry name" value="RHO"/>
    <property type="match status" value="1"/>
</dbReference>
<dbReference type="SUPFAM" id="SSF52540">
    <property type="entry name" value="P-loop containing nucleoside triphosphate hydrolases"/>
    <property type="match status" value="1"/>
</dbReference>
<dbReference type="PROSITE" id="PS51419">
    <property type="entry name" value="RAB"/>
    <property type="match status" value="1"/>
</dbReference>
<comment type="function">
    <text evidence="1 8 16 17 21">The small GTPases Rab are key regulators of intracellular membrane trafficking, from the formation of transport vesicles to their fusion with membranes (PubMed:20545908, PubMed:9437002, PubMed:23236136). Rabs cycle between an inactive GDP-bound form and an active GTP-bound form that is able to recruit to membranes different set of downstream effectors directly responsible for vesicle formation, movement, tethering and fusion (PubMed:9437002). Plays a role in the initial events of the autophagic vacuole development which take place at specialized regions of the endoplasmic reticulum (PubMed:20545908). Regulates vesicular transport between the endoplasmic reticulum and successive Golgi compartments (By similarity). Required to modulate the compacted morphology of the Golgi (PubMed:26209634). Promotes the recruitment of lipid phosphatase MTMR6 to the endoplasmic reticulum-Golgi intermediate compartment (By similarity).</text>
</comment>
<comment type="catalytic activity">
    <reaction evidence="16 21">
        <text>GTP + H2O = GDP + phosphate + H(+)</text>
        <dbReference type="Rhea" id="RHEA:19669"/>
        <dbReference type="ChEBI" id="CHEBI:15377"/>
        <dbReference type="ChEBI" id="CHEBI:15378"/>
        <dbReference type="ChEBI" id="CHEBI:37565"/>
        <dbReference type="ChEBI" id="CHEBI:43474"/>
        <dbReference type="ChEBI" id="CHEBI:58189"/>
        <dbReference type="EC" id="3.6.5.2"/>
    </reaction>
    <physiologicalReaction direction="left-to-right" evidence="24 25">
        <dbReference type="Rhea" id="RHEA:19670"/>
    </physiologicalReaction>
</comment>
<comment type="cofactor">
    <cofactor evidence="9 16 18">
        <name>Mg(2+)</name>
        <dbReference type="ChEBI" id="CHEBI:18420"/>
    </cofactor>
</comment>
<comment type="activity regulation">
    <text evidence="5 16 20 23">Regulated by guanine nucleotide exchange factors (GEFs) which promote the exchange of bound GDP for free GTP (Probable). Regulated by GTPase activating proteins (GAPs) including TBC1D20 which increases the GTP hydrolysis activity (PubMed:23236136). Inhibited by GDP dissociation inhibitors (GDIs) (PubMed:11389151, PubMed:8836150).</text>
</comment>
<comment type="subunit">
    <text evidence="2 5 6 15 16 18 20 21">Interacts with MICAL1 and MICAL2 (PubMed:15694364, PubMed:27552051). Interacts (in GTP-bound form) with MICALCL, MICAL1 and MILCAL3 (PubMed:15694364, PubMed:27552051). Interacts with GDI1; the interaction requires the GDP-bound state (PubMed:11389151, PubMed:8836150). Interacts with CHM/REP1; the interaction requires the GDP-bound form and is necessary for prenylation by GGTase II (PubMed:11389151, PubMed:9437002). Interacts with RabGAP TBC1D20 (PubMed:23236136). Interacts (in GDP-bound form) with lipid phosphatase MTMR6 (via GRAM domain); the interaction regulates MTMR6 recruitment to the endoplasmic reticulum-Golgi intermediate compartment (PubMed:23188820). Interacts (in GDP-bound form) with lipid phosphatase MTMR7 (By similarity).</text>
</comment>
<comment type="subunit">
    <text evidence="7 9 10 11 12 13 14">(Microbial infection) Interacts with L.pneumophila AnkX (PubMed:21822290, PubMed:22307087). Interacts with L.pneumophila Lem3 (PubMed:22158903, PubMed:22307087). Interacts with L.pneumophila SidD (PubMed:21680813, PubMed:21734656). Interacts with L.pneumophila DrrA (PubMed:20064470, PubMed:20651120).</text>
</comment>
<comment type="interaction">
    <interactant intactId="EBI-1045214">
        <id>Q9H0U4</id>
    </interactant>
    <interactant intactId="EBI-5323863">
        <id>Q5S007</id>
        <label>LRRK2</label>
    </interactant>
    <organismsDiffer>false</organismsDiffer>
    <experiments>5</experiments>
</comment>
<comment type="interaction">
    <interactant intactId="EBI-1045214">
        <id>Q9H0U4</id>
    </interactant>
    <interactant intactId="EBI-6148898">
        <id>Q01968</id>
        <label>OCRL</label>
    </interactant>
    <organismsDiffer>false</organismsDiffer>
    <experiments>3</experiments>
</comment>
<comment type="interaction">
    <interactant intactId="EBI-1045214">
        <id>Q9H0U4</id>
    </interactant>
    <interactant intactId="EBI-11687286">
        <id>Q9UKF7-1</id>
        <label>PITPNC1</label>
    </interactant>
    <organismsDiffer>false</organismsDiffer>
    <experiments>4</experiments>
</comment>
<comment type="interaction">
    <interactant intactId="EBI-1045214">
        <id>Q9H0U4</id>
    </interactant>
    <interactant intactId="EBI-713992">
        <id>P47224</id>
        <label>RABIF</label>
    </interactant>
    <organismsDiffer>false</organismsDiffer>
    <experiments>10</experiments>
</comment>
<comment type="interaction">
    <interactant intactId="EBI-1045214">
        <id>Q9H0U4</id>
    </interactant>
    <interactant intactId="EBI-6417967">
        <id>Q5ZWZ3</id>
        <label>lpg0940</label>
    </interactant>
    <organismsDiffer>true</organismsDiffer>
    <experiments>3</experiments>
</comment>
<comment type="subcellular location">
    <subcellularLocation>
        <location evidence="5">Cytoplasm</location>
    </subcellularLocation>
    <subcellularLocation>
        <location evidence="5">Membrane</location>
        <topology evidence="5">Lipid-anchor</topology>
        <orientation evidence="5">Cytoplasmic side</orientation>
    </subcellularLocation>
    <subcellularLocation>
        <location evidence="8">Preautophagosomal structure membrane</location>
        <topology evidence="23">Lipid-anchor</topology>
        <orientation evidence="23">Cytoplasmic side</orientation>
    </subcellularLocation>
    <subcellularLocation>
        <location evidence="1">Cytoplasm</location>
        <location evidence="1">Perinuclear region</location>
    </subcellularLocation>
    <text evidence="1 5">Targeted by REP1 to membranes of specific subcellular compartments including endoplasmic reticulum, Golgi apparatus, and intermediate vesicles between these two compartments (PubMed:11389151). In the GDP-form, colocalizes with GDI in the cytoplasm (PubMed:11389151). Co-localizes with MTMR6 to the endoplasmic reticulum-Golgi intermediate compartment and to the peri-Golgi region (By similarity).</text>
</comment>
<comment type="domain">
    <text evidence="7">Switch 1, switch 2 and the interswitch regions are characteristic of Rab GTPases and mediate the interactions with Rab downstream effectors. The switch regions undergo conformational changes upon nucleotide binding which drives interaction with specific sets of effector proteins, with most effectors only binding to GTP-bound Rab.</text>
</comment>
<comment type="PTM">
    <text evidence="5 20">Prenylated; by GGTase II, only after interaction of the substrate with Rab escort protein 1 (REP1).</text>
</comment>
<comment type="PTM">
    <text evidence="9">(Microbial infection) AMPylation at Tyr-77 by L.pneumophila DrrA occurs in the switch 2 region and leads to moderate inactivation of the GTPase activity. It appears to prolong the lifetime of the GTP state of RAB1B by restricting access of GTPase effectors to switch 2 and blocking effector-stimulated GTP hydrolysis, thereby rendering RAB1B constitutively active. It is later de-AMPylated by L.pneumophila SidD, releasing RAB1B from bacterial phagosomes.</text>
</comment>
<comment type="PTM">
    <text evidence="12 13 14">(Microbial infection) Phosphocholinated at Ser-76 by L.pneumophila AnkX, leading to displace GDP dissociation inhibitors (GDI) (PubMed:21822290, PubMed:22307087). Both GDP-bound and GTP-bound forms can be phosphocholinated. Dephosphocholinated by L.pneumophila Lem3, restoring accessibility to L.pneumophila GTPase effector LepB (PubMed:22158903, PubMed:22307087).</text>
</comment>
<comment type="PTM">
    <text evidence="19">(Microbial infection) Glycosylated by S.typhimurium protein Ssek3: arginine GlcNAcylation prevents GTPase activity, thereby disrupting vesicular protein transport from the endoplasmic reticulum (ER) to the Golgi compartment.</text>
</comment>
<comment type="miscellaneous">
    <text>Rab-1B binds GTP and GDP and possesses low intrinsic GTPase activity.</text>
</comment>
<comment type="similarity">
    <text evidence="23">Belongs to the small GTPase superfamily. Rab family.</text>
</comment>
<evidence type="ECO:0000250" key="1">
    <source>
        <dbReference type="UniProtKB" id="P10536"/>
    </source>
</evidence>
<evidence type="ECO:0000250" key="2">
    <source>
        <dbReference type="UniProtKB" id="Q9D1G1"/>
    </source>
</evidence>
<evidence type="ECO:0000255" key="3"/>
<evidence type="ECO:0000256" key="4">
    <source>
        <dbReference type="SAM" id="MobiDB-lite"/>
    </source>
</evidence>
<evidence type="ECO:0000269" key="5">
    <source>
    </source>
</evidence>
<evidence type="ECO:0000269" key="6">
    <source>
    </source>
</evidence>
<evidence type="ECO:0000269" key="7">
    <source>
    </source>
</evidence>
<evidence type="ECO:0000269" key="8">
    <source>
    </source>
</evidence>
<evidence type="ECO:0000269" key="9">
    <source>
    </source>
</evidence>
<evidence type="ECO:0000269" key="10">
    <source>
    </source>
</evidence>
<evidence type="ECO:0000269" key="11">
    <source>
    </source>
</evidence>
<evidence type="ECO:0000269" key="12">
    <source>
    </source>
</evidence>
<evidence type="ECO:0000269" key="13">
    <source>
    </source>
</evidence>
<evidence type="ECO:0000269" key="14">
    <source>
    </source>
</evidence>
<evidence type="ECO:0000269" key="15">
    <source>
    </source>
</evidence>
<evidence type="ECO:0000269" key="16">
    <source>
    </source>
</evidence>
<evidence type="ECO:0000269" key="17">
    <source>
    </source>
</evidence>
<evidence type="ECO:0000269" key="18">
    <source>
    </source>
</evidence>
<evidence type="ECO:0000269" key="19">
    <source>
    </source>
</evidence>
<evidence type="ECO:0000269" key="20">
    <source>
    </source>
</evidence>
<evidence type="ECO:0000269" key="21">
    <source>
    </source>
</evidence>
<evidence type="ECO:0000269" key="22">
    <source ref="5"/>
</evidence>
<evidence type="ECO:0000305" key="23"/>
<evidence type="ECO:0000305" key="24">
    <source>
    </source>
</evidence>
<evidence type="ECO:0000305" key="25">
    <source>
    </source>
</evidence>
<evidence type="ECO:0000312" key="26">
    <source>
        <dbReference type="HGNC" id="HGNC:18370"/>
    </source>
</evidence>
<evidence type="ECO:0007744" key="27">
    <source>
        <dbReference type="PDB" id="3JZA"/>
    </source>
</evidence>
<evidence type="ECO:0007744" key="28">
    <source>
        <dbReference type="PDB" id="3NKV"/>
    </source>
</evidence>
<evidence type="ECO:0007744" key="29">
    <source>
        <dbReference type="PDB" id="4HLQ"/>
    </source>
</evidence>
<evidence type="ECO:0007744" key="30">
    <source>
        <dbReference type="PDB" id="4I1O"/>
    </source>
</evidence>
<evidence type="ECO:0007744" key="31">
    <source>
        <dbReference type="PDB" id="5SZH"/>
    </source>
</evidence>
<evidence type="ECO:0007744" key="32">
    <source>
        <dbReference type="PDB" id="5SZK"/>
    </source>
</evidence>
<evidence type="ECO:0007829" key="33">
    <source>
        <dbReference type="PDB" id="3JZA"/>
    </source>
</evidence>
<evidence type="ECO:0007829" key="34">
    <source>
        <dbReference type="PDB" id="3NKV"/>
    </source>
</evidence>
<evidence type="ECO:0007829" key="35">
    <source>
        <dbReference type="PDB" id="4HLQ"/>
    </source>
</evidence>
<protein>
    <recommendedName>
        <fullName>Ras-related protein Rab-1B</fullName>
        <ecNumber evidence="16 21">3.6.5.2</ecNumber>
    </recommendedName>
</protein>
<gene>
    <name evidence="26" type="primary">RAB1B</name>
</gene>
<name>RAB1B_HUMAN</name>
<keyword id="KW-0002">3D-structure</keyword>
<keyword id="KW-0007">Acetylation</keyword>
<keyword id="KW-0072">Autophagy</keyword>
<keyword id="KW-0963">Cytoplasm</keyword>
<keyword id="KW-0903">Direct protein sequencing</keyword>
<keyword id="KW-0325">Glycoprotein</keyword>
<keyword id="KW-0342">GTP-binding</keyword>
<keyword id="KW-0378">Hydrolase</keyword>
<keyword id="KW-0449">Lipoprotein</keyword>
<keyword id="KW-0472">Membrane</keyword>
<keyword id="KW-0488">Methylation</keyword>
<keyword id="KW-0547">Nucleotide-binding</keyword>
<keyword id="KW-0597">Phosphoprotein</keyword>
<keyword id="KW-0636">Prenylation</keyword>
<keyword id="KW-0653">Protein transport</keyword>
<keyword id="KW-1267">Proteomics identification</keyword>
<keyword id="KW-1185">Reference proteome</keyword>
<keyword id="KW-0813">Transport</keyword>
<sequence>MNPEYDYLFKLLLIGDSGVGKSCLLLRFADDTYTESYISTIGVDFKIRTIELDGKTIKLQIWDTAGQERFRTITSSYYRGAHGIIVVYDVTDQESYANVKQWLQEIDRYASENVNKLLVGNKSDLTTKKVVDNTTAKEFADSLGIPFLETSAKNATNVEQAFMTMAAEIKKRMGPGAASGGERPNLKIDSTPVKPAGGGCC</sequence>
<proteinExistence type="evidence at protein level"/>
<accession>Q9H0U4</accession>
<accession>A8K7S1</accession>
<reference key="1">
    <citation type="submission" date="1998-09" db="EMBL/GenBank/DDBJ databases">
        <title>Cloning and sequencing of a novel human cDNA homology to rat ras-related rab1B cDNA.</title>
        <authorList>
            <person name="Zhao Y."/>
            <person name="Yu L."/>
            <person name="Xin Y.R."/>
            <person name="Zhang M."/>
            <person name="Chen S.Y."/>
            <person name="Zhao S.Y."/>
        </authorList>
    </citation>
    <scope>NUCLEOTIDE SEQUENCE [MRNA]</scope>
</reference>
<reference key="2">
    <citation type="journal article" date="2001" name="Genome Res.">
        <title>Towards a catalog of human genes and proteins: sequencing and analysis of 500 novel complete protein coding human cDNAs.</title>
        <authorList>
            <person name="Wiemann S."/>
            <person name="Weil B."/>
            <person name="Wellenreuther R."/>
            <person name="Gassenhuber J."/>
            <person name="Glassl S."/>
            <person name="Ansorge W."/>
            <person name="Boecher M."/>
            <person name="Bloecker H."/>
            <person name="Bauersachs S."/>
            <person name="Blum H."/>
            <person name="Lauber J."/>
            <person name="Duesterhoeft A."/>
            <person name="Beyer A."/>
            <person name="Koehrer K."/>
            <person name="Strack N."/>
            <person name="Mewes H.-W."/>
            <person name="Ottenwaelder B."/>
            <person name="Obermaier B."/>
            <person name="Tampe J."/>
            <person name="Heubner D."/>
            <person name="Wambutt R."/>
            <person name="Korn B."/>
            <person name="Klein M."/>
            <person name="Poustka A."/>
        </authorList>
    </citation>
    <scope>NUCLEOTIDE SEQUENCE [LARGE SCALE MRNA]</scope>
    <source>
        <tissue>Brain</tissue>
    </source>
</reference>
<reference key="3">
    <citation type="journal article" date="2004" name="Nat. Genet.">
        <title>Complete sequencing and characterization of 21,243 full-length human cDNAs.</title>
        <authorList>
            <person name="Ota T."/>
            <person name="Suzuki Y."/>
            <person name="Nishikawa T."/>
            <person name="Otsuki T."/>
            <person name="Sugiyama T."/>
            <person name="Irie R."/>
            <person name="Wakamatsu A."/>
            <person name="Hayashi K."/>
            <person name="Sato H."/>
            <person name="Nagai K."/>
            <person name="Kimura K."/>
            <person name="Makita H."/>
            <person name="Sekine M."/>
            <person name="Obayashi M."/>
            <person name="Nishi T."/>
            <person name="Shibahara T."/>
            <person name="Tanaka T."/>
            <person name="Ishii S."/>
            <person name="Yamamoto J."/>
            <person name="Saito K."/>
            <person name="Kawai Y."/>
            <person name="Isono Y."/>
            <person name="Nakamura Y."/>
            <person name="Nagahari K."/>
            <person name="Murakami K."/>
            <person name="Yasuda T."/>
            <person name="Iwayanagi T."/>
            <person name="Wagatsuma M."/>
            <person name="Shiratori A."/>
            <person name="Sudo H."/>
            <person name="Hosoiri T."/>
            <person name="Kaku Y."/>
            <person name="Kodaira H."/>
            <person name="Kondo H."/>
            <person name="Sugawara M."/>
            <person name="Takahashi M."/>
            <person name="Kanda K."/>
            <person name="Yokoi T."/>
            <person name="Furuya T."/>
            <person name="Kikkawa E."/>
            <person name="Omura Y."/>
            <person name="Abe K."/>
            <person name="Kamihara K."/>
            <person name="Katsuta N."/>
            <person name="Sato K."/>
            <person name="Tanikawa M."/>
            <person name="Yamazaki M."/>
            <person name="Ninomiya K."/>
            <person name="Ishibashi T."/>
            <person name="Yamashita H."/>
            <person name="Murakawa K."/>
            <person name="Fujimori K."/>
            <person name="Tanai H."/>
            <person name="Kimata M."/>
            <person name="Watanabe M."/>
            <person name="Hiraoka S."/>
            <person name="Chiba Y."/>
            <person name="Ishida S."/>
            <person name="Ono Y."/>
            <person name="Takiguchi S."/>
            <person name="Watanabe S."/>
            <person name="Yosida M."/>
            <person name="Hotuta T."/>
            <person name="Kusano J."/>
            <person name="Kanehori K."/>
            <person name="Takahashi-Fujii A."/>
            <person name="Hara H."/>
            <person name="Tanase T.-O."/>
            <person name="Nomura Y."/>
            <person name="Togiya S."/>
            <person name="Komai F."/>
            <person name="Hara R."/>
            <person name="Takeuchi K."/>
            <person name="Arita M."/>
            <person name="Imose N."/>
            <person name="Musashino K."/>
            <person name="Yuuki H."/>
            <person name="Oshima A."/>
            <person name="Sasaki N."/>
            <person name="Aotsuka S."/>
            <person name="Yoshikawa Y."/>
            <person name="Matsunawa H."/>
            <person name="Ichihara T."/>
            <person name="Shiohata N."/>
            <person name="Sano S."/>
            <person name="Moriya S."/>
            <person name="Momiyama H."/>
            <person name="Satoh N."/>
            <person name="Takami S."/>
            <person name="Terashima Y."/>
            <person name="Suzuki O."/>
            <person name="Nakagawa S."/>
            <person name="Senoh A."/>
            <person name="Mizoguchi H."/>
            <person name="Goto Y."/>
            <person name="Shimizu F."/>
            <person name="Wakebe H."/>
            <person name="Hishigaki H."/>
            <person name="Watanabe T."/>
            <person name="Sugiyama A."/>
            <person name="Takemoto M."/>
            <person name="Kawakami B."/>
            <person name="Yamazaki M."/>
            <person name="Watanabe K."/>
            <person name="Kumagai A."/>
            <person name="Itakura S."/>
            <person name="Fukuzumi Y."/>
            <person name="Fujimori Y."/>
            <person name="Komiyama M."/>
            <person name="Tashiro H."/>
            <person name="Tanigami A."/>
            <person name="Fujiwara T."/>
            <person name="Ono T."/>
            <person name="Yamada K."/>
            <person name="Fujii Y."/>
            <person name="Ozaki K."/>
            <person name="Hirao M."/>
            <person name="Ohmori Y."/>
            <person name="Kawabata A."/>
            <person name="Hikiji T."/>
            <person name="Kobatake N."/>
            <person name="Inagaki H."/>
            <person name="Ikema Y."/>
            <person name="Okamoto S."/>
            <person name="Okitani R."/>
            <person name="Kawakami T."/>
            <person name="Noguchi S."/>
            <person name="Itoh T."/>
            <person name="Shigeta K."/>
            <person name="Senba T."/>
            <person name="Matsumura K."/>
            <person name="Nakajima Y."/>
            <person name="Mizuno T."/>
            <person name="Morinaga M."/>
            <person name="Sasaki M."/>
            <person name="Togashi T."/>
            <person name="Oyama M."/>
            <person name="Hata H."/>
            <person name="Watanabe M."/>
            <person name="Komatsu T."/>
            <person name="Mizushima-Sugano J."/>
            <person name="Satoh T."/>
            <person name="Shirai Y."/>
            <person name="Takahashi Y."/>
            <person name="Nakagawa K."/>
            <person name="Okumura K."/>
            <person name="Nagase T."/>
            <person name="Nomura N."/>
            <person name="Kikuchi H."/>
            <person name="Masuho Y."/>
            <person name="Yamashita R."/>
            <person name="Nakai K."/>
            <person name="Yada T."/>
            <person name="Nakamura Y."/>
            <person name="Ohara O."/>
            <person name="Isogai T."/>
            <person name="Sugano S."/>
        </authorList>
    </citation>
    <scope>NUCLEOTIDE SEQUENCE [LARGE SCALE MRNA]</scope>
    <source>
        <tissue>Placenta</tissue>
        <tissue>Synovium</tissue>
    </source>
</reference>
<reference key="4">
    <citation type="journal article" date="2004" name="Genome Res.">
        <title>The status, quality, and expansion of the NIH full-length cDNA project: the Mammalian Gene Collection (MGC).</title>
        <authorList>
            <consortium name="The MGC Project Team"/>
        </authorList>
    </citation>
    <scope>NUCLEOTIDE SEQUENCE [LARGE SCALE MRNA]</scope>
    <source>
        <tissue>Pancreas</tissue>
    </source>
</reference>
<reference key="5">
    <citation type="submission" date="2005-06" db="UniProtKB">
        <authorList>
            <person name="Bienvenut W.V."/>
        </authorList>
    </citation>
    <scope>PROTEIN SEQUENCE OF 1-21; 28-46; 59-69; 80-100 AND 138-170</scope>
    <scope>ACETYLATION AT MET-1</scope>
    <scope>IDENTIFICATION BY MASS SPECTROMETRY</scope>
    <source>
        <tissue>B-cell lymphoma</tissue>
    </source>
</reference>
<reference key="6">
    <citation type="journal article" date="1996" name="Biochem. J.">
        <title>Prenylation of a Rab1B mutant with altered GTPase activity is impaired in cell-free systems but not in intact mammalian cells.</title>
        <authorList>
            <person name="Wilson A.L."/>
            <person name="Sheridan K.M."/>
            <person name="Erdman R.A."/>
            <person name="Maltese W.A."/>
        </authorList>
    </citation>
    <scope>ISOPRENYLATION AT CYS-200 AND CYS-201</scope>
    <scope>INTERACTION WITH GDI1</scope>
    <scope>MUTAGENESIS OF GLN-67</scope>
    <scope>ACTIVITY REGULATION</scope>
</reference>
<reference key="7">
    <citation type="journal article" date="1998" name="Mol. Biol. Cell">
        <title>The putative 'switch 2' domain of the Ras-related GTPase, Rab1B, plays an essential role in the interaction with Rab escort protein.</title>
        <authorList>
            <person name="Overmeyer J.H."/>
            <person name="Wilson A.L."/>
            <person name="Erdman R.A."/>
            <person name="Maltese W.A."/>
        </authorList>
    </citation>
    <scope>INTERACTION WITH CHM</scope>
    <scope>FUNCTION</scope>
    <scope>MUTAGENESIS OF GLN-67; ILE-73; TYR-78; ALA-81; LEU-103; ALA-110; LYS-137 AND GLY-144</scope>
    <scope>CATALYTIC ACTIVITY</scope>
</reference>
<reference key="8">
    <citation type="journal article" date="2001" name="J. Biol. Chem.">
        <title>Membrane targeting of a Rab GTPase that fails to associate with Rab escort protein (REP) or guanine nucleotide dissociation inhibitor (GDI).</title>
        <authorList>
            <person name="Overmeyer J.H."/>
            <person name="Wilson A.L."/>
            <person name="Maltese W.A."/>
        </authorList>
    </citation>
    <scope>SUBCELLULAR LOCATION</scope>
    <scope>ISOPRENYLATION</scope>
    <scope>INTERACTION WITH GDI1 AND CHM</scope>
    <scope>MUTAGENESIS OF TYR-78</scope>
    <scope>ACTIVITY REGULATION</scope>
</reference>
<reference key="9">
    <citation type="journal article" date="2005" name="Biochem. Biophys. Res. Commun.">
        <title>The MICAL proteins and rab1: a possible link to the cytoskeleton?</title>
        <authorList>
            <person name="Fischer J."/>
            <person name="Weide T."/>
            <person name="Barnekow A."/>
        </authorList>
    </citation>
    <scope>INTERACTION WITH MICAL1; MICAL2 AND MICAL3</scope>
</reference>
<reference key="10">
    <citation type="journal article" date="2010" name="Traffic">
        <title>Autophagosome formation depends on the small GTPase Rab1 and functional ER exit sites.</title>
        <authorList>
            <person name="Zoppino F.C."/>
            <person name="Militello R.D."/>
            <person name="Slavin I."/>
            <person name="Alvarez C."/>
            <person name="Colombo M.I."/>
        </authorList>
    </citation>
    <scope>FUNCTION</scope>
    <scope>SUBCELLULAR LOCATION</scope>
    <scope>MUTAGENESIS OF ASN-121</scope>
</reference>
<reference key="11">
    <citation type="journal article" date="2011" name="Nature">
        <title>Legionella pneumophila SidD is a deAMPylase that modifies Rab1.</title>
        <authorList>
            <person name="Tan Y."/>
            <person name="Luo Z.Q."/>
        </authorList>
    </citation>
    <scope>INTERACTION WITH L.PNEUMOPHILA SIDD</scope>
    <scope>DEAMPYLATION AT TYR-77</scope>
</reference>
<reference key="12">
    <citation type="journal article" date="2011" name="Nature">
        <title>Modulation of Rab GTPase function by a protein phosphocholine transferase.</title>
        <authorList>
            <person name="Mukherjee S."/>
            <person name="Liu X."/>
            <person name="Arasaki K."/>
            <person name="McDonough J."/>
            <person name="Galan J.E."/>
            <person name="Roy C.R."/>
        </authorList>
    </citation>
    <scope>INTERACTION WITH L.PNEUMOPHILA ANKX (MICROBIAL INFECTION)</scope>
    <scope>PHOSPHORYLATION AT SER-76 (MICROBIAL INFECTION)</scope>
    <scope>MUTAGENESIS OF SER-76</scope>
</reference>
<reference key="13">
    <citation type="journal article" date="2011" name="Proc. Natl. Acad. Sci. U.S.A.">
        <title>Legionella pneumophila regulates the small GTPase Rab1 activity by reversible phosphorylcholination.</title>
        <authorList>
            <person name="Tan Y."/>
            <person name="Arnold R.J."/>
            <person name="Luo Z.Q."/>
        </authorList>
    </citation>
    <scope>INTERACTION WITH L.PNEUMOPHILA LEM3 (MICROBIAL INFECTION)</scope>
    <scope>PHOSPHORYLATION AT SER-76 (MICROBIAL INFECTION)</scope>
</reference>
<reference key="14">
    <citation type="journal article" date="2011" name="Science">
        <title>De-AMPylation of the small GTPase Rab1 by the pathogen Legionella pneumophila.</title>
        <authorList>
            <person name="Neunuebel M.R."/>
            <person name="Chen Y."/>
            <person name="Gaspar A.H."/>
            <person name="Backlund P.S. Jr."/>
            <person name="Yergey A."/>
            <person name="Machner M.P."/>
        </authorList>
    </citation>
    <scope>INTERACTION WITH L.PNEUMOPHILA SIDD (MICROBIAL INFECTION)</scope>
    <scope>DEAMPYLATION AT TYR-77</scope>
</reference>
<reference key="15">
    <citation type="journal article" date="2012" name="EMBO J.">
        <title>Reversible phosphocholination of Rab proteins by Legionella pneumophila effector proteins.</title>
        <authorList>
            <person name="Goody P.R."/>
            <person name="Heller K."/>
            <person name="Oesterlin L.K."/>
            <person name="Muller M.P."/>
            <person name="Itzen A."/>
            <person name="Goody R.S."/>
        </authorList>
    </citation>
    <scope>INTERACTION WITH L.PNEUMOPHILA ANKX AND LEM3 (MICROBIAL INFECTION)</scope>
    <scope>PHOSPHORYLATION AT SER-76 (MICROBIAL INFECTION)</scope>
</reference>
<reference key="16">
    <citation type="journal article" date="2013" name="J. Biol. Chem.">
        <title>Phosphatidylinositol 3-phosphatase myotubularin-related protein 6 (MTMR6) is regulated by small GTPase Rab1B in the early secretory and autophagic pathways.</title>
        <authorList>
            <person name="Mochizuki Y."/>
            <person name="Ohashi R."/>
            <person name="Kawamura T."/>
            <person name="Iwanari H."/>
            <person name="Kodama T."/>
            <person name="Naito M."/>
            <person name="Hamakubo T."/>
        </authorList>
    </citation>
    <scope>INTERACTION WITH MTMR6</scope>
    <scope>IDENTIFICATION BY MASS SPECTROMETRY</scope>
</reference>
<reference key="17">
    <citation type="journal article" date="2015" name="J. Biol. Chem.">
        <title>Small GTPase Rab2B and Its Specific Binding Protein Golgi-associated Rab2B Interactor-like 4 (GARI-L4) Regulate Golgi Morphology.</title>
        <authorList>
            <person name="Aizawa M."/>
            <person name="Fukuda M."/>
        </authorList>
    </citation>
    <scope>FUNCTION</scope>
</reference>
<reference key="18">
    <citation type="journal article" date="2015" name="Proteomics">
        <title>N-terminome analysis of the human mitochondrial proteome.</title>
        <authorList>
            <person name="Vaca Jacome A.S."/>
            <person name="Rabilloud T."/>
            <person name="Schaeffer-Reiss C."/>
            <person name="Rompais M."/>
            <person name="Ayoub D."/>
            <person name="Lane L."/>
            <person name="Bairoch A."/>
            <person name="Van Dorsselaer A."/>
            <person name="Carapito C."/>
        </authorList>
    </citation>
    <scope>IDENTIFICATION BY MASS SPECTROMETRY [LARGE SCALE ANALYSIS]</scope>
</reference>
<reference key="19">
    <citation type="journal article" date="2020" name="Front. Cell. Infect. Microbiol.">
        <title>The Salmonella effector SseK3 targets small Rab GTPases.</title>
        <authorList>
            <person name="Gan J."/>
            <person name="Scott N.E."/>
            <person name="Newson J.P.M."/>
            <person name="Wibawa R.R."/>
            <person name="Wong Fok Lung T."/>
            <person name="Pollock G.L."/>
            <person name="Ng G.Z."/>
            <person name="van Driel I."/>
            <person name="Pearson J.S."/>
            <person name="Hartland E.L."/>
            <person name="Giogha C."/>
        </authorList>
    </citation>
    <scope>GLYCOSYLATION (MICROBIAL INFECTION)</scope>
</reference>
<reference evidence="27" key="20">
    <citation type="journal article" date="2009" name="Mol. Cell">
        <title>RabGDI displacement by DrrA from Legionella is a consequence of its guanine nucleotide exchange activity.</title>
        <authorList>
            <person name="Schoebel S."/>
            <person name="Oesterlin L.K."/>
            <person name="Blankenfeldt W."/>
            <person name="Goody R.S."/>
            <person name="Itzen A."/>
        </authorList>
    </citation>
    <scope>X-RAY CRYSTALLOGRAPHY (1.8 ANGSTROMS) OF 3-174 IN COMPLEX WITH L.PNEUMOPHILA DRRA GEF DOMAIN</scope>
    <scope>GTP-BINDING</scope>
    <scope>DOMAIN</scope>
</reference>
<reference evidence="28" key="21">
    <citation type="journal article" date="2010" name="Science">
        <title>The Legionella effector protein DrrA AMPylates the membrane traffic regulator Rab1b.</title>
        <authorList>
            <person name="Muller M.P."/>
            <person name="Peters H."/>
            <person name="Blumer J."/>
            <person name="Blankenfeldt W."/>
            <person name="Goody R.S."/>
            <person name="Itzen A."/>
        </authorList>
    </citation>
    <scope>X-RAY CRYSTALLOGRAPHY (1.7 ANGSTROMS) OF 3-174 IN COMPLEX WITH MG(2+); GTP ANALOG AND L.PNEUMOPHILA DRRA (MICROBIAL INFECTION)</scope>
    <scope>AMPYLATION AT TYR-77 (MICROBIAL INFECTION)</scope>
    <scope>IDENTIFICATION BY MASS SPECTROMETRY</scope>
    <scope>MUTAGENESIS OF TYR-77</scope>
    <scope>GTP-BINDING</scope>
    <scope>COFACTOR</scope>
</reference>
<reference evidence="29" key="22">
    <citation type="journal article" date="2012" name="Proc. Natl. Acad. Sci. U.S.A.">
        <title>Catalytic mechanism of a mammalian Rab.RabGAP complex in atomic detail.</title>
        <authorList>
            <person name="Gavriljuk K."/>
            <person name="Gazdag E.M."/>
            <person name="Itzen A."/>
            <person name="Kotting C."/>
            <person name="Goody R.S."/>
            <person name="Gerwert K."/>
        </authorList>
    </citation>
    <scope>X-RAY CRYSTALLOGRAPHY (3.3 ANGSTROMS) OF 3-174 IN COMPLEX WITH MG(2+); TBC1D20</scope>
    <scope>MISCELLANEOUS</scope>
    <scope>MUTAGENESIS OF GLN-67</scope>
    <scope>GTP-BINDING</scope>
    <scope>COFACTOR</scope>
    <scope>ACTIVITY REGULATION</scope>
    <scope>CATALYTIC ACTIVITY</scope>
</reference>
<reference evidence="31 32" key="23">
    <citation type="journal article" date="2016" name="Elife">
        <title>bMERB domains are bivalent Rab8 family effectors evolved by gene duplication.</title>
        <authorList>
            <person name="Rai A."/>
            <person name="Oprisko A."/>
            <person name="Campos J."/>
            <person name="Fu Y."/>
            <person name="Friese T."/>
            <person name="Itzen A."/>
            <person name="Goody R.S."/>
            <person name="Gazdag E.M."/>
            <person name="Muller M.P."/>
        </authorList>
    </citation>
    <scope>X-RAY CRYSTALLOGRAPHY (2.30 ANGSTROMS) IN COMPLEX WITH MG(2+); GTP ANALOG AND MICALCL</scope>
    <scope>INTERACTION WITH MICAL1 AND MILCAL3</scope>
    <scope>COFACTOR</scope>
</reference>
<feature type="chain" id="PRO_0000121061" description="Ras-related protein Rab-1B">
    <location>
        <begin position="1"/>
        <end position="201"/>
    </location>
</feature>
<feature type="region of interest" description="Switch 2 region; required for interaction with REP1/CHM">
    <location>
        <begin position="64"/>
        <end position="83"/>
    </location>
</feature>
<feature type="region of interest" description="Disordered" evidence="4">
    <location>
        <begin position="174"/>
        <end position="201"/>
    </location>
</feature>
<feature type="short sequence motif" description="Switch 1" evidence="7 27">
    <location>
        <begin position="30"/>
        <end position="45"/>
    </location>
</feature>
<feature type="short sequence motif" description="Switch 2" evidence="7 27">
    <location>
        <begin position="65"/>
        <end position="80"/>
    </location>
</feature>
<feature type="binding site" evidence="9 18 28 31 32">
    <location>
        <position position="17"/>
    </location>
    <ligand>
        <name>GTP</name>
        <dbReference type="ChEBI" id="CHEBI:37565"/>
    </ligand>
</feature>
<feature type="binding site" evidence="18 31 32">
    <location>
        <position position="18"/>
    </location>
    <ligand>
        <name>GTP</name>
        <dbReference type="ChEBI" id="CHEBI:37565"/>
    </ligand>
</feature>
<feature type="binding site" evidence="28">
    <location>
        <position position="19"/>
    </location>
    <ligand>
        <name>GTP</name>
        <dbReference type="ChEBI" id="CHEBI:37565"/>
    </ligand>
</feature>
<feature type="binding site" evidence="9 18 28 31 32">
    <location>
        <position position="20"/>
    </location>
    <ligand>
        <name>GTP</name>
        <dbReference type="ChEBI" id="CHEBI:37565"/>
    </ligand>
</feature>
<feature type="binding site" evidence="9 18 28 31 32">
    <location>
        <position position="21"/>
    </location>
    <ligand>
        <name>GTP</name>
        <dbReference type="ChEBI" id="CHEBI:37565"/>
    </ligand>
</feature>
<feature type="binding site" evidence="9 18 28 31 32">
    <location>
        <position position="22"/>
    </location>
    <ligand>
        <name>GTP</name>
        <dbReference type="ChEBI" id="CHEBI:37565"/>
    </ligand>
</feature>
<feature type="binding site" evidence="9 16 18 28 29 30 31 32">
    <location>
        <position position="22"/>
    </location>
    <ligand>
        <name>Mg(2+)</name>
        <dbReference type="ChEBI" id="CHEBI:18420"/>
    </ligand>
</feature>
<feature type="binding site" evidence="9 18 28 31 32">
    <location>
        <position position="23"/>
    </location>
    <ligand>
        <name>GTP</name>
        <dbReference type="ChEBI" id="CHEBI:37565"/>
    </ligand>
</feature>
<feature type="binding site" evidence="18 31">
    <location>
        <position position="33"/>
    </location>
    <ligand>
        <name>GTP</name>
        <dbReference type="ChEBI" id="CHEBI:37565"/>
    </ligand>
</feature>
<feature type="binding site" evidence="9 28">
    <location>
        <position position="34"/>
    </location>
    <ligand>
        <name>GTP</name>
        <dbReference type="ChEBI" id="CHEBI:37565"/>
    </ligand>
</feature>
<feature type="binding site" evidence="9 18 28 31 32">
    <location>
        <position position="35"/>
    </location>
    <ligand>
        <name>GTP</name>
        <dbReference type="ChEBI" id="CHEBI:37565"/>
    </ligand>
</feature>
<feature type="binding site" evidence="9 28">
    <location>
        <position position="36"/>
    </location>
    <ligand>
        <name>GTP</name>
        <dbReference type="ChEBI" id="CHEBI:37565"/>
    </ligand>
</feature>
<feature type="binding site" evidence="18 31">
    <location>
        <position position="39"/>
    </location>
    <ligand>
        <name>GTP</name>
        <dbReference type="ChEBI" id="CHEBI:37565"/>
    </ligand>
</feature>
<feature type="binding site" evidence="9 18 28 31 32">
    <location>
        <position position="40"/>
    </location>
    <ligand>
        <name>GTP</name>
        <dbReference type="ChEBI" id="CHEBI:37565"/>
    </ligand>
</feature>
<feature type="binding site" evidence="9 16 18 28 29 30 31 32">
    <location>
        <position position="40"/>
    </location>
    <ligand>
        <name>Mg(2+)</name>
        <dbReference type="ChEBI" id="CHEBI:18420"/>
    </ligand>
</feature>
<feature type="binding site" evidence="16 18 29 31">
    <location>
        <position position="63"/>
    </location>
    <ligand>
        <name>Mg(2+)</name>
        <dbReference type="ChEBI" id="CHEBI:18420"/>
    </ligand>
</feature>
<feature type="binding site" evidence="9 18 28 31 32">
    <location>
        <position position="66"/>
    </location>
    <ligand>
        <name>GTP</name>
        <dbReference type="ChEBI" id="CHEBI:37565"/>
    </ligand>
</feature>
<feature type="binding site" evidence="9 18 28 31 32">
    <location>
        <position position="121"/>
    </location>
    <ligand>
        <name>GTP</name>
        <dbReference type="ChEBI" id="CHEBI:37565"/>
    </ligand>
</feature>
<feature type="binding site" evidence="18 31 32">
    <location>
        <position position="122"/>
    </location>
    <ligand>
        <name>GTP</name>
        <dbReference type="ChEBI" id="CHEBI:37565"/>
    </ligand>
</feature>
<feature type="binding site" evidence="9 18 28 31 32">
    <location>
        <position position="124"/>
    </location>
    <ligand>
        <name>GTP</name>
        <dbReference type="ChEBI" id="CHEBI:37565"/>
    </ligand>
</feature>
<feature type="binding site" evidence="18 32">
    <location>
        <position position="151"/>
    </location>
    <ligand>
        <name>GTP</name>
        <dbReference type="ChEBI" id="CHEBI:37565"/>
    </ligand>
</feature>
<feature type="binding site" evidence="9 18 28 31 32">
    <location>
        <position position="152"/>
    </location>
    <ligand>
        <name>GTP</name>
        <dbReference type="ChEBI" id="CHEBI:37565"/>
    </ligand>
</feature>
<feature type="binding site" evidence="9 18 28 31 32">
    <location>
        <position position="153"/>
    </location>
    <ligand>
        <name>GTP</name>
        <dbReference type="ChEBI" id="CHEBI:37565"/>
    </ligand>
</feature>
<feature type="modified residue" description="N-acetylmethionine" evidence="22">
    <location>
        <position position="1"/>
    </location>
</feature>
<feature type="modified residue" description="(Microbial infection) O-(2-cholinephosphoryl)serine" evidence="12 13 14">
    <location>
        <position position="76"/>
    </location>
</feature>
<feature type="modified residue" description="(Microbial infection) O-AMP-tyrosine" evidence="9">
    <location>
        <position position="77"/>
    </location>
</feature>
<feature type="modified residue" description="Cysteine methyl ester" evidence="3">
    <location>
        <position position="201"/>
    </location>
</feature>
<feature type="lipid moiety-binding region" description="S-geranylgeranyl cysteine" evidence="20">
    <location>
        <position position="200"/>
    </location>
</feature>
<feature type="lipid moiety-binding region" description="S-geranylgeranyl cysteine" evidence="20">
    <location>
        <position position="201"/>
    </location>
</feature>
<feature type="mutagenesis site" description="No effect on GDI1 binding. Reduces prenylation in vitro, but not in vivo. No effect on interaction with REP1/CHM; 100-fold refunction in intrinsic GTPase activity." evidence="16 20 21">
    <original>Q</original>
    <variation>L</variation>
    <location>
        <position position="67"/>
    </location>
</feature>
<feature type="mutagenesis site" description="Abolishes interaction with REP1/CHM. No prenylation. Much lower GDP/GTP ratio." evidence="21">
    <original>I</original>
    <variation>N</variation>
    <location>
        <position position="73"/>
    </location>
</feature>
<feature type="mutagenesis site" description="Abolishes phosphocholination by Legionella AnkX." evidence="12">
    <original>S</original>
    <variation>A</variation>
    <location>
        <position position="76"/>
    </location>
</feature>
<feature type="mutagenesis site" description="Abolishes AMPylation by Legionella DrrA." evidence="9">
    <original>Y</original>
    <variation>F</variation>
    <location>
        <position position="77"/>
    </location>
</feature>
<feature type="mutagenesis site" description="Abolishes interaction with REP1/CHM and GDI1. No prenylation. Much lower GDP/GTP ratio. No membrane association." evidence="5 21">
    <original>Y</original>
    <variation>D</variation>
    <location>
        <position position="78"/>
    </location>
</feature>
<feature type="mutagenesis site" description="Abolishes interaction with REP1/CHM. No prenylation. Lowers GDP/GTP ratio by half." evidence="21">
    <original>A</original>
    <variation>D</variation>
    <location>
        <position position="81"/>
    </location>
</feature>
<feature type="mutagenesis site" description="No effect on prenylation." evidence="21">
    <original>L</original>
    <variation>R</variation>
    <location>
        <position position="103"/>
    </location>
</feature>
<feature type="mutagenesis site" description="No effect on prenylation." evidence="21">
    <original>A</original>
    <variation>D</variation>
    <location>
        <position position="110"/>
    </location>
</feature>
<feature type="mutagenesis site" description="Prevent formation of autophagosomes." evidence="8">
    <original>N</original>
    <variation>I</variation>
    <location>
        <position position="121"/>
    </location>
</feature>
<feature type="mutagenesis site" description="No effect on prenylation." evidence="21">
    <original>K</original>
    <variation>E</variation>
    <location>
        <position position="137"/>
    </location>
</feature>
<feature type="mutagenesis site" description="No effect on prenylation." evidence="21">
    <original>G</original>
    <variation>N</variation>
    <location>
        <position position="144"/>
    </location>
</feature>
<feature type="strand" evidence="34">
    <location>
        <begin position="6"/>
        <end position="16"/>
    </location>
</feature>
<feature type="strand" evidence="35">
    <location>
        <begin position="17"/>
        <end position="20"/>
    </location>
</feature>
<feature type="helix" evidence="34">
    <location>
        <begin position="21"/>
        <end position="30"/>
    </location>
</feature>
<feature type="helix" evidence="33">
    <location>
        <begin position="36"/>
        <end position="41"/>
    </location>
</feature>
<feature type="strand" evidence="34">
    <location>
        <begin position="42"/>
        <end position="52"/>
    </location>
</feature>
<feature type="strand" evidence="34">
    <location>
        <begin position="55"/>
        <end position="64"/>
    </location>
</feature>
<feature type="helix" evidence="34">
    <location>
        <begin position="68"/>
        <end position="70"/>
    </location>
</feature>
<feature type="helix" evidence="34">
    <location>
        <begin position="71"/>
        <end position="75"/>
    </location>
</feature>
<feature type="turn" evidence="34">
    <location>
        <begin position="76"/>
        <end position="80"/>
    </location>
</feature>
<feature type="strand" evidence="34">
    <location>
        <begin position="82"/>
        <end position="89"/>
    </location>
</feature>
<feature type="helix" evidence="34">
    <location>
        <begin position="93"/>
        <end position="97"/>
    </location>
</feature>
<feature type="helix" evidence="34">
    <location>
        <begin position="99"/>
        <end position="109"/>
    </location>
</feature>
<feature type="strand" evidence="34">
    <location>
        <begin position="115"/>
        <end position="121"/>
    </location>
</feature>
<feature type="turn" evidence="34">
    <location>
        <begin position="126"/>
        <end position="128"/>
    </location>
</feature>
<feature type="helix" evidence="34">
    <location>
        <begin position="133"/>
        <end position="142"/>
    </location>
</feature>
<feature type="strand" evidence="34">
    <location>
        <begin position="147"/>
        <end position="149"/>
    </location>
</feature>
<feature type="turn" evidence="34">
    <location>
        <begin position="152"/>
        <end position="154"/>
    </location>
</feature>
<feature type="helix" evidence="34">
    <location>
        <begin position="158"/>
        <end position="171"/>
    </location>
</feature>